<feature type="chain" id="PRO_0000137806" description="Argininosuccinate lyase">
    <location>
        <begin position="1"/>
        <end position="464"/>
    </location>
</feature>
<feature type="sequence conflict" description="In Ref. 2; AAA88425." evidence="2" ref="2">
    <original>TN</original>
    <variation>PY</variation>
    <location>
        <begin position="6"/>
        <end position="7"/>
    </location>
</feature>
<feature type="sequence conflict" description="In Ref. 2; AAA88425." evidence="2" ref="2">
    <original>GGRFSEPVDAFVARFTASVDFDKRLYR</original>
    <variation>VDPLQASPSTPSSRRVRRQPSTSTSVLYH</variation>
    <location>
        <begin position="11"/>
        <end position="37"/>
    </location>
</feature>
<feature type="sequence conflict" description="In Ref. 2; AAA88425." evidence="2" ref="2">
    <original>D</original>
    <variation>E</variation>
    <location>
        <position position="184"/>
    </location>
</feature>
<feature type="sequence conflict" description="In Ref. 2; AAA88425 and 3; AAA25721." evidence="2" ref="2 3">
    <original>VDCRKRVNRMPLGSAALAGTTYPIQREITCQL</original>
    <variation>RRLPQAGQPHAARLGGPGRHHLPDPARRSPASC</variation>
    <location>
        <begin position="189"/>
        <end position="220"/>
    </location>
</feature>
<name>ARLY_PSEAE</name>
<keyword id="KW-0028">Amino-acid biosynthesis</keyword>
<keyword id="KW-0055">Arginine biosynthesis</keyword>
<keyword id="KW-0963">Cytoplasm</keyword>
<keyword id="KW-0456">Lyase</keyword>
<keyword id="KW-1185">Reference proteome</keyword>
<proteinExistence type="inferred from homology"/>
<organism>
    <name type="scientific">Pseudomonas aeruginosa (strain ATCC 15692 / DSM 22644 / CIP 104116 / JCM 14847 / LMG 12228 / 1C / PRS 101 / PAO1)</name>
    <dbReference type="NCBI Taxonomy" id="208964"/>
    <lineage>
        <taxon>Bacteria</taxon>
        <taxon>Pseudomonadati</taxon>
        <taxon>Pseudomonadota</taxon>
        <taxon>Gammaproteobacteria</taxon>
        <taxon>Pseudomonadales</taxon>
        <taxon>Pseudomonadaceae</taxon>
        <taxon>Pseudomonas</taxon>
    </lineage>
</organism>
<accession>P50987</accession>
<accession>Q9HTT6</accession>
<protein>
    <recommendedName>
        <fullName evidence="1">Argininosuccinate lyase</fullName>
        <shortName evidence="1">ASAL</shortName>
        <ecNumber evidence="1">4.3.2.1</ecNumber>
    </recommendedName>
    <alternativeName>
        <fullName evidence="1">Arginosuccinase</fullName>
    </alternativeName>
</protein>
<sequence>MSVEKTNQSWGGRFSEPVDAFVARFTASVDFDKRLYRHDIMGSIAHATMLAKVGVLSDAERDAIVDGLQQIQAEIEAGSFDWRVDLEDVHMNIEARLTDRIGVTGKKLHTGRSRNDQVATDIRLWLRDEIDTILAEITRLQEGLLGLAEAEADTIMPGFTHLQTAQPVTFGHHLLAWFEMLGRDYERLVDCRKRVNRMPLGSAALAGTTYPIQREITCQLLGFDAVGGNSLDGVSDRDFAIEFCAAASLAMMHLSRFSEELVLWTSAQFQFIDLPDRFCTGSSIMPQKKNPDVPELVRGKSGRVFGALTGLLTLMKGQPLAYNKDNQEDKEPLFDAADTLRDSLRAFADMVPAIRPRREIMREAARRGFSTATDLADYLVRKGLPFRDCHEIVGHAVKYGVDSGKDLAEMSLDELRRFSEQIDADVFDVLTLEGSVNARDHIGGTAPNQVRAAVARGRKLLAQR</sequence>
<evidence type="ECO:0000255" key="1">
    <source>
        <dbReference type="HAMAP-Rule" id="MF_00006"/>
    </source>
</evidence>
<evidence type="ECO:0000305" key="2"/>
<gene>
    <name evidence="1" type="primary">argH</name>
    <name type="ordered locus">PA5263</name>
</gene>
<comment type="catalytic activity">
    <reaction evidence="1">
        <text>2-(N(omega)-L-arginino)succinate = fumarate + L-arginine</text>
        <dbReference type="Rhea" id="RHEA:24020"/>
        <dbReference type="ChEBI" id="CHEBI:29806"/>
        <dbReference type="ChEBI" id="CHEBI:32682"/>
        <dbReference type="ChEBI" id="CHEBI:57472"/>
        <dbReference type="EC" id="4.3.2.1"/>
    </reaction>
</comment>
<comment type="pathway">
    <text evidence="1">Amino-acid biosynthesis; L-arginine biosynthesis; L-arginine from L-ornithine and carbamoyl phosphate: step 3/3.</text>
</comment>
<comment type="subcellular location">
    <subcellularLocation>
        <location evidence="1">Cytoplasm</location>
    </subcellularLocation>
</comment>
<comment type="similarity">
    <text evidence="1">Belongs to the lyase 1 family. Argininosuccinate lyase subfamily.</text>
</comment>
<dbReference type="EC" id="4.3.2.1" evidence="1"/>
<dbReference type="EMBL" id="AE004091">
    <property type="protein sequence ID" value="AAG08648.1"/>
    <property type="molecule type" value="Genomic_DNA"/>
</dbReference>
<dbReference type="EMBL" id="L48729">
    <property type="protein sequence ID" value="AAA88425.1"/>
    <property type="molecule type" value="Genomic_DNA"/>
</dbReference>
<dbReference type="EMBL" id="M61001">
    <property type="protein sequence ID" value="AAA25721.1"/>
    <property type="molecule type" value="Genomic_DNA"/>
</dbReference>
<dbReference type="PIR" id="A37143">
    <property type="entry name" value="A37143"/>
</dbReference>
<dbReference type="PIR" id="E82989">
    <property type="entry name" value="E82989"/>
</dbReference>
<dbReference type="RefSeq" id="NP_253950.1">
    <property type="nucleotide sequence ID" value="NC_002516.2"/>
</dbReference>
<dbReference type="RefSeq" id="WP_003114030.1">
    <property type="nucleotide sequence ID" value="NZ_QZGE01000002.1"/>
</dbReference>
<dbReference type="SMR" id="P50987"/>
<dbReference type="FunCoup" id="P50987">
    <property type="interactions" value="625"/>
</dbReference>
<dbReference type="STRING" id="208964.PA5263"/>
<dbReference type="PaxDb" id="208964-PA5263"/>
<dbReference type="GeneID" id="879636"/>
<dbReference type="KEGG" id="pae:PA5263"/>
<dbReference type="PATRIC" id="fig|208964.12.peg.5516"/>
<dbReference type="PseudoCAP" id="PA5263"/>
<dbReference type="HOGENOM" id="CLU_027272_2_3_6"/>
<dbReference type="InParanoid" id="P50987"/>
<dbReference type="OrthoDB" id="9769623at2"/>
<dbReference type="PhylomeDB" id="P50987"/>
<dbReference type="BioCyc" id="PAER208964:G1FZ6-5384-MONOMER"/>
<dbReference type="UniPathway" id="UPA00068">
    <property type="reaction ID" value="UER00114"/>
</dbReference>
<dbReference type="Proteomes" id="UP000002438">
    <property type="component" value="Chromosome"/>
</dbReference>
<dbReference type="GO" id="GO:0005829">
    <property type="term" value="C:cytosol"/>
    <property type="evidence" value="ECO:0000318"/>
    <property type="project" value="GO_Central"/>
</dbReference>
<dbReference type="GO" id="GO:0004056">
    <property type="term" value="F:argininosuccinate lyase activity"/>
    <property type="evidence" value="ECO:0000318"/>
    <property type="project" value="GO_Central"/>
</dbReference>
<dbReference type="GO" id="GO:0042450">
    <property type="term" value="P:arginine biosynthetic process via ornithine"/>
    <property type="evidence" value="ECO:0000318"/>
    <property type="project" value="GO_Central"/>
</dbReference>
<dbReference type="GO" id="GO:0006526">
    <property type="term" value="P:L-arginine biosynthetic process"/>
    <property type="evidence" value="ECO:0007669"/>
    <property type="project" value="UniProtKB-UniRule"/>
</dbReference>
<dbReference type="CDD" id="cd01359">
    <property type="entry name" value="Argininosuccinate_lyase"/>
    <property type="match status" value="1"/>
</dbReference>
<dbReference type="FunFam" id="1.10.275.10:FF:000002">
    <property type="entry name" value="Argininosuccinate lyase"/>
    <property type="match status" value="1"/>
</dbReference>
<dbReference type="FunFam" id="1.10.40.30:FF:000001">
    <property type="entry name" value="Argininosuccinate lyase"/>
    <property type="match status" value="1"/>
</dbReference>
<dbReference type="FunFam" id="1.20.200.10:FF:000015">
    <property type="entry name" value="argininosuccinate lyase isoform X2"/>
    <property type="match status" value="1"/>
</dbReference>
<dbReference type="Gene3D" id="1.10.40.30">
    <property type="entry name" value="Fumarase/aspartase (C-terminal domain)"/>
    <property type="match status" value="1"/>
</dbReference>
<dbReference type="Gene3D" id="1.20.200.10">
    <property type="entry name" value="Fumarase/aspartase (Central domain)"/>
    <property type="match status" value="1"/>
</dbReference>
<dbReference type="Gene3D" id="1.10.275.10">
    <property type="entry name" value="Fumarase/aspartase (N-terminal domain)"/>
    <property type="match status" value="1"/>
</dbReference>
<dbReference type="HAMAP" id="MF_00006">
    <property type="entry name" value="Arg_succ_lyase"/>
    <property type="match status" value="1"/>
</dbReference>
<dbReference type="InterPro" id="IPR029419">
    <property type="entry name" value="Arg_succ_lyase_C"/>
</dbReference>
<dbReference type="InterPro" id="IPR009049">
    <property type="entry name" value="Argininosuccinate_lyase"/>
</dbReference>
<dbReference type="InterPro" id="IPR024083">
    <property type="entry name" value="Fumarase/histidase_N"/>
</dbReference>
<dbReference type="InterPro" id="IPR020557">
    <property type="entry name" value="Fumarate_lyase_CS"/>
</dbReference>
<dbReference type="InterPro" id="IPR000362">
    <property type="entry name" value="Fumarate_lyase_fam"/>
</dbReference>
<dbReference type="InterPro" id="IPR022761">
    <property type="entry name" value="Fumarate_lyase_N"/>
</dbReference>
<dbReference type="InterPro" id="IPR008948">
    <property type="entry name" value="L-Aspartase-like"/>
</dbReference>
<dbReference type="NCBIfam" id="TIGR00838">
    <property type="entry name" value="argH"/>
    <property type="match status" value="1"/>
</dbReference>
<dbReference type="PANTHER" id="PTHR43814">
    <property type="entry name" value="ARGININOSUCCINATE LYASE"/>
    <property type="match status" value="1"/>
</dbReference>
<dbReference type="PANTHER" id="PTHR43814:SF1">
    <property type="entry name" value="ARGININOSUCCINATE LYASE"/>
    <property type="match status" value="1"/>
</dbReference>
<dbReference type="Pfam" id="PF14698">
    <property type="entry name" value="ASL_C2"/>
    <property type="match status" value="1"/>
</dbReference>
<dbReference type="Pfam" id="PF00206">
    <property type="entry name" value="Lyase_1"/>
    <property type="match status" value="1"/>
</dbReference>
<dbReference type="PRINTS" id="PR00145">
    <property type="entry name" value="ARGSUCLYASE"/>
</dbReference>
<dbReference type="PRINTS" id="PR00149">
    <property type="entry name" value="FUMRATELYASE"/>
</dbReference>
<dbReference type="SUPFAM" id="SSF48557">
    <property type="entry name" value="L-aspartase-like"/>
    <property type="match status" value="1"/>
</dbReference>
<dbReference type="PROSITE" id="PS00163">
    <property type="entry name" value="FUMARATE_LYASES"/>
    <property type="match status" value="1"/>
</dbReference>
<reference key="1">
    <citation type="journal article" date="2000" name="Nature">
        <title>Complete genome sequence of Pseudomonas aeruginosa PAO1, an opportunistic pathogen.</title>
        <authorList>
            <person name="Stover C.K."/>
            <person name="Pham X.-Q.T."/>
            <person name="Erwin A.L."/>
            <person name="Mizoguchi S.D."/>
            <person name="Warrener P."/>
            <person name="Hickey M.J."/>
            <person name="Brinkman F.S.L."/>
            <person name="Hufnagle W.O."/>
            <person name="Kowalik D.J."/>
            <person name="Lagrou M."/>
            <person name="Garber R.L."/>
            <person name="Goltry L."/>
            <person name="Tolentino E."/>
            <person name="Westbrock-Wadman S."/>
            <person name="Yuan Y."/>
            <person name="Brody L.L."/>
            <person name="Coulter S.N."/>
            <person name="Folger K.R."/>
            <person name="Kas A."/>
            <person name="Larbig K."/>
            <person name="Lim R.M."/>
            <person name="Smith K.A."/>
            <person name="Spencer D.H."/>
            <person name="Wong G.K.-S."/>
            <person name="Wu Z."/>
            <person name="Paulsen I.T."/>
            <person name="Reizer J."/>
            <person name="Saier M.H. Jr."/>
            <person name="Hancock R.E.W."/>
            <person name="Lory S."/>
            <person name="Olson M.V."/>
        </authorList>
    </citation>
    <scope>NUCLEOTIDE SEQUENCE [LARGE SCALE GENOMIC DNA]</scope>
    <source>
        <strain>ATCC 15692 / DSM 22644 / CIP 104116 / JCM 14847 / LMG 12228 / 1C / PRS 101 / PAO1</strain>
    </source>
</reference>
<reference key="2">
    <citation type="submission" date="1996-02" db="EMBL/GenBank/DDBJ databases">
        <authorList>
            <person name="Whitchurch C.B."/>
            <person name="Alm R.A."/>
            <person name="Mattick J.S."/>
        </authorList>
    </citation>
    <scope>NUCLEOTIDE SEQUENCE [GENOMIC DNA] OF 1-243</scope>
    <source>
        <strain>ATCC 15692 / DSM 22644 / CIP 104116 / JCM 14847 / LMG 12228 / 1C / PRS 101 / PAO1</strain>
    </source>
</reference>
<reference key="3">
    <citation type="journal article" date="1990" name="J. Bacteriol.">
        <title>Gene-scrambling mutagenesis: generation and analysis of insertional mutations in the alginate regulatory region of Pseudomonas aeruginosa.</title>
        <authorList>
            <person name="Mohr C.D."/>
            <person name="Deretic V."/>
        </authorList>
    </citation>
    <scope>NUCLEOTIDE SEQUENCE [GENOMIC DNA] OF 42-241</scope>
</reference>